<gene>
    <name evidence="6" type="primary">Ufm1</name>
    <name evidence="6" type="ORF">CG34191</name>
</gene>
<dbReference type="EMBL" id="AE013599">
    <property type="protein sequence ID" value="ABV53832.1"/>
    <property type="molecule type" value="Genomic_DNA"/>
</dbReference>
<dbReference type="EMBL" id="BT099855">
    <property type="protein sequence ID" value="ACX30017.1"/>
    <property type="status" value="ALT_INIT"/>
    <property type="molecule type" value="mRNA"/>
</dbReference>
<dbReference type="EMBL" id="BT100274">
    <property type="protein sequence ID" value="ACY72393.1"/>
    <property type="molecule type" value="mRNA"/>
</dbReference>
<dbReference type="RefSeq" id="NP_001097354.1">
    <property type="nucleotide sequence ID" value="NM_001103884.4"/>
</dbReference>
<dbReference type="RefSeq" id="NP_001286507.1">
    <property type="nucleotide sequence ID" value="NM_001299578.1"/>
</dbReference>
<dbReference type="SMR" id="A8DYH2"/>
<dbReference type="BioGRID" id="625346">
    <property type="interactions" value="4"/>
</dbReference>
<dbReference type="FunCoup" id="A8DYH2">
    <property type="interactions" value="1053"/>
</dbReference>
<dbReference type="IntAct" id="A8DYH2">
    <property type="interactions" value="4"/>
</dbReference>
<dbReference type="STRING" id="7227.FBpp0111299"/>
<dbReference type="PaxDb" id="7227-FBpp0111299"/>
<dbReference type="DNASU" id="5740715"/>
<dbReference type="EnsemblMetazoa" id="FBtr0112384">
    <property type="protein sequence ID" value="FBpp0111299"/>
    <property type="gene ID" value="FBgn0085220"/>
</dbReference>
<dbReference type="EnsemblMetazoa" id="FBtr0340071">
    <property type="protein sequence ID" value="FBpp0309077"/>
    <property type="gene ID" value="FBgn0085220"/>
</dbReference>
<dbReference type="GeneID" id="5740715"/>
<dbReference type="KEGG" id="dme:Dmel_CG34191"/>
<dbReference type="UCSC" id="CG34191-RA">
    <property type="organism name" value="d. melanogaster"/>
</dbReference>
<dbReference type="AGR" id="FB:FBgn0085220"/>
<dbReference type="CTD" id="51569"/>
<dbReference type="FlyBase" id="FBgn0085220">
    <property type="gene designation" value="Ufm1"/>
</dbReference>
<dbReference type="VEuPathDB" id="VectorBase:FBgn0085220"/>
<dbReference type="eggNOG" id="KOG3483">
    <property type="taxonomic scope" value="Eukaryota"/>
</dbReference>
<dbReference type="GeneTree" id="ENSGT00390000010391"/>
<dbReference type="HOGENOM" id="CLU_175114_0_0_1"/>
<dbReference type="InParanoid" id="A8DYH2"/>
<dbReference type="OMA" id="MEHAVGK"/>
<dbReference type="OrthoDB" id="284357at2759"/>
<dbReference type="PhylomeDB" id="A8DYH2"/>
<dbReference type="BioGRID-ORCS" id="5740715">
    <property type="hits" value="0 hits in 1 CRISPR screen"/>
</dbReference>
<dbReference type="GenomeRNAi" id="5740715"/>
<dbReference type="PRO" id="PR:A8DYH2"/>
<dbReference type="Proteomes" id="UP000000803">
    <property type="component" value="Chromosome 2R"/>
</dbReference>
<dbReference type="Bgee" id="FBgn0085220">
    <property type="expression patterns" value="Expressed in adult middle midgut class II enteroendocrine cell in adult midgut (Drosophila) and 120 other cell types or tissues"/>
</dbReference>
<dbReference type="ExpressionAtlas" id="A8DYH2">
    <property type="expression patterns" value="baseline and differential"/>
</dbReference>
<dbReference type="GO" id="GO:0005737">
    <property type="term" value="C:cytoplasm"/>
    <property type="evidence" value="ECO:0000250"/>
    <property type="project" value="FlyBase"/>
</dbReference>
<dbReference type="GO" id="GO:0005829">
    <property type="term" value="C:cytosol"/>
    <property type="evidence" value="ECO:0000314"/>
    <property type="project" value="FlyBase"/>
</dbReference>
<dbReference type="GO" id="GO:0005634">
    <property type="term" value="C:nucleus"/>
    <property type="evidence" value="ECO:0000250"/>
    <property type="project" value="FlyBase"/>
</dbReference>
<dbReference type="GO" id="GO:0031386">
    <property type="term" value="F:protein tag activity"/>
    <property type="evidence" value="ECO:0000314"/>
    <property type="project" value="FlyBase"/>
</dbReference>
<dbReference type="GO" id="GO:0050905">
    <property type="term" value="P:neuromuscular process"/>
    <property type="evidence" value="ECO:0000315"/>
    <property type="project" value="UniProtKB"/>
</dbReference>
<dbReference type="GO" id="GO:0071569">
    <property type="term" value="P:protein ufmylation"/>
    <property type="evidence" value="ECO:0000314"/>
    <property type="project" value="FlyBase"/>
</dbReference>
<dbReference type="GO" id="GO:0034976">
    <property type="term" value="P:response to endoplasmic reticulum stress"/>
    <property type="evidence" value="ECO:0000250"/>
    <property type="project" value="FlyBase"/>
</dbReference>
<dbReference type="GO" id="GO:0061709">
    <property type="term" value="P:reticulophagy"/>
    <property type="evidence" value="ECO:0000318"/>
    <property type="project" value="GO_Central"/>
</dbReference>
<dbReference type="CDD" id="cd01766">
    <property type="entry name" value="Ubl_UFM1"/>
    <property type="match status" value="1"/>
</dbReference>
<dbReference type="FunFam" id="3.10.20.90:FF:000044">
    <property type="entry name" value="Ubiquitin-fold modifier 1"/>
    <property type="match status" value="1"/>
</dbReference>
<dbReference type="Gene3D" id="3.10.20.90">
    <property type="entry name" value="Phosphatidylinositol 3-kinase Catalytic Subunit, Chain A, domain 1"/>
    <property type="match status" value="1"/>
</dbReference>
<dbReference type="InterPro" id="IPR029071">
    <property type="entry name" value="Ubiquitin-like_domsf"/>
</dbReference>
<dbReference type="InterPro" id="IPR005375">
    <property type="entry name" value="UFM1"/>
</dbReference>
<dbReference type="PANTHER" id="PTHR15825">
    <property type="entry name" value="UBIQUITIN-FOLD MODIFIER 1"/>
    <property type="match status" value="1"/>
</dbReference>
<dbReference type="PANTHER" id="PTHR15825:SF0">
    <property type="entry name" value="UBIQUITIN-FOLD MODIFIER 1"/>
    <property type="match status" value="1"/>
</dbReference>
<dbReference type="Pfam" id="PF03671">
    <property type="entry name" value="Ufm1"/>
    <property type="match status" value="1"/>
</dbReference>
<dbReference type="PIRSF" id="PIRSF038027">
    <property type="entry name" value="Ubiquitin-like_Ufm1"/>
    <property type="match status" value="1"/>
</dbReference>
<dbReference type="SUPFAM" id="SSF54236">
    <property type="entry name" value="Ubiquitin-like"/>
    <property type="match status" value="1"/>
</dbReference>
<feature type="chain" id="PRO_0000392003" description="Ubiquitin-fold modifier 1">
    <location>
        <begin position="1"/>
        <end position="83"/>
    </location>
</feature>
<feature type="propeptide" id="PRO_0000392004" description="Removed in mature form" evidence="1">
    <location>
        <begin position="84"/>
        <end position="87"/>
    </location>
</feature>
<feature type="cross-link" description="Glycyl lysine isopeptide (Lys-Gly) (interchain with G-Cter in UFM1)" evidence="1">
    <location>
        <position position="69"/>
    </location>
</feature>
<feature type="cross-link" description="Glycyl lysine isopeptide (Gly-Lys) (interchain with K-? in acceptor proteins)" evidence="2">
    <location>
        <position position="83"/>
    </location>
</feature>
<keyword id="KW-0963">Cytoplasm</keyword>
<keyword id="KW-1017">Isopeptide bond</keyword>
<keyword id="KW-0539">Nucleus</keyword>
<keyword id="KW-1185">Reference proteome</keyword>
<keyword id="KW-0832">Ubl conjugation</keyword>
<keyword id="KW-0833">Ubl conjugation pathway</keyword>
<organism>
    <name type="scientific">Drosophila melanogaster</name>
    <name type="common">Fruit fly</name>
    <dbReference type="NCBI Taxonomy" id="7227"/>
    <lineage>
        <taxon>Eukaryota</taxon>
        <taxon>Metazoa</taxon>
        <taxon>Ecdysozoa</taxon>
        <taxon>Arthropoda</taxon>
        <taxon>Hexapoda</taxon>
        <taxon>Insecta</taxon>
        <taxon>Pterygota</taxon>
        <taxon>Neoptera</taxon>
        <taxon>Endopterygota</taxon>
        <taxon>Diptera</taxon>
        <taxon>Brachycera</taxon>
        <taxon>Muscomorpha</taxon>
        <taxon>Ephydroidea</taxon>
        <taxon>Drosophilidae</taxon>
        <taxon>Drosophila</taxon>
        <taxon>Sophophora</taxon>
    </lineage>
</organism>
<evidence type="ECO:0000250" key="1">
    <source>
        <dbReference type="UniProtKB" id="P61960"/>
    </source>
</evidence>
<evidence type="ECO:0000255" key="2"/>
<evidence type="ECO:0000269" key="3">
    <source>
    </source>
</evidence>
<evidence type="ECO:0000269" key="4">
    <source>
    </source>
</evidence>
<evidence type="ECO:0000305" key="5"/>
<evidence type="ECO:0000312" key="6">
    <source>
        <dbReference type="FlyBase" id="FBgn0085220"/>
    </source>
</evidence>
<proteinExistence type="evidence at protein level"/>
<comment type="function">
    <text evidence="1 3">Ubiquitin-like modifier which can be covalently attached via an isopeptide bond to substrate proteins as a monomer or a lysine-linked polymer (By similarity). The so-called ufmylation, requires the UFM1-activating E1 enzyme Uba5, the UFM1-conjugating E2 enzyme Ufc1, and the UFM1-ligase E3 enzyme Ufl1 (By similarity). This post-translational modification on lysine residues of proteins may play a crucial role in a number of cellular processes (By similarity). The Ufm1 cascade might play a role in the development of the neuromuscular junctions (PubMed:26872069).</text>
</comment>
<comment type="subunit">
    <text evidence="1">Interacts with Uba5.</text>
</comment>
<comment type="interaction">
    <interactant intactId="EBI-15116417">
        <id>A8DYH2</id>
    </interactant>
    <interactant intactId="EBI-15116415">
        <id>Q4V6M7</id>
        <label>Ufsp1</label>
    </interactant>
    <organismsDiffer>false</organismsDiffer>
    <experiments>4</experiments>
</comment>
<comment type="subcellular location">
    <subcellularLocation>
        <location evidence="1">Nucleus</location>
    </subcellularLocation>
    <subcellularLocation>
        <location evidence="1">Cytoplasm</location>
    </subcellularLocation>
</comment>
<comment type="developmental stage">
    <text evidence="4">Expression in the adult brain declines with age.</text>
</comment>
<comment type="disruption phenotype">
    <text evidence="3">RNAi-mediated knockdown shows aberrant neuromuscular junctions in the larval muscle and abnormal wings, locomotive defects and a shortened lifespan in the adult. RNAi-mediated knockdown in the nervous system results also in aberrant neuromuscular junctions characterized by reduced number of type Ib boutons and increased bouton size in the larval muscle.</text>
</comment>
<comment type="similarity">
    <text evidence="5">Belongs to the UFM1 family.</text>
</comment>
<comment type="sequence caution" evidence="5">
    <conflict type="erroneous initiation">
        <sequence resource="EMBL-CDS" id="ACX30017"/>
    </conflict>
</comment>
<accession>A8DYH2</accession>
<accession>C9QNX3</accession>
<sequence length="87" mass="9438">MSKVTFKITLTSDPKLPFKVLSVPEGTPFTAVLKFASEEFKVPAETSAIITDDGIGISPQQTAGNVFLKHGSELRLIPRDRVGHQLS</sequence>
<name>UFM1_DROME</name>
<reference key="1">
    <citation type="journal article" date="2000" name="Science">
        <title>The genome sequence of Drosophila melanogaster.</title>
        <authorList>
            <person name="Adams M.D."/>
            <person name="Celniker S.E."/>
            <person name="Holt R.A."/>
            <person name="Evans C.A."/>
            <person name="Gocayne J.D."/>
            <person name="Amanatides P.G."/>
            <person name="Scherer S.E."/>
            <person name="Li P.W."/>
            <person name="Hoskins R.A."/>
            <person name="Galle R.F."/>
            <person name="George R.A."/>
            <person name="Lewis S.E."/>
            <person name="Richards S."/>
            <person name="Ashburner M."/>
            <person name="Henderson S.N."/>
            <person name="Sutton G.G."/>
            <person name="Wortman J.R."/>
            <person name="Yandell M.D."/>
            <person name="Zhang Q."/>
            <person name="Chen L.X."/>
            <person name="Brandon R.C."/>
            <person name="Rogers Y.-H.C."/>
            <person name="Blazej R.G."/>
            <person name="Champe M."/>
            <person name="Pfeiffer B.D."/>
            <person name="Wan K.H."/>
            <person name="Doyle C."/>
            <person name="Baxter E.G."/>
            <person name="Helt G."/>
            <person name="Nelson C.R."/>
            <person name="Miklos G.L.G."/>
            <person name="Abril J.F."/>
            <person name="Agbayani A."/>
            <person name="An H.-J."/>
            <person name="Andrews-Pfannkoch C."/>
            <person name="Baldwin D."/>
            <person name="Ballew R.M."/>
            <person name="Basu A."/>
            <person name="Baxendale J."/>
            <person name="Bayraktaroglu L."/>
            <person name="Beasley E.M."/>
            <person name="Beeson K.Y."/>
            <person name="Benos P.V."/>
            <person name="Berman B.P."/>
            <person name="Bhandari D."/>
            <person name="Bolshakov S."/>
            <person name="Borkova D."/>
            <person name="Botchan M.R."/>
            <person name="Bouck J."/>
            <person name="Brokstein P."/>
            <person name="Brottier P."/>
            <person name="Burtis K.C."/>
            <person name="Busam D.A."/>
            <person name="Butler H."/>
            <person name="Cadieu E."/>
            <person name="Center A."/>
            <person name="Chandra I."/>
            <person name="Cherry J.M."/>
            <person name="Cawley S."/>
            <person name="Dahlke C."/>
            <person name="Davenport L.B."/>
            <person name="Davies P."/>
            <person name="de Pablos B."/>
            <person name="Delcher A."/>
            <person name="Deng Z."/>
            <person name="Mays A.D."/>
            <person name="Dew I."/>
            <person name="Dietz S.M."/>
            <person name="Dodson K."/>
            <person name="Doup L.E."/>
            <person name="Downes M."/>
            <person name="Dugan-Rocha S."/>
            <person name="Dunkov B.C."/>
            <person name="Dunn P."/>
            <person name="Durbin K.J."/>
            <person name="Evangelista C.C."/>
            <person name="Ferraz C."/>
            <person name="Ferriera S."/>
            <person name="Fleischmann W."/>
            <person name="Fosler C."/>
            <person name="Gabrielian A.E."/>
            <person name="Garg N.S."/>
            <person name="Gelbart W.M."/>
            <person name="Glasser K."/>
            <person name="Glodek A."/>
            <person name="Gong F."/>
            <person name="Gorrell J.H."/>
            <person name="Gu Z."/>
            <person name="Guan P."/>
            <person name="Harris M."/>
            <person name="Harris N.L."/>
            <person name="Harvey D.A."/>
            <person name="Heiman T.J."/>
            <person name="Hernandez J.R."/>
            <person name="Houck J."/>
            <person name="Hostin D."/>
            <person name="Houston K.A."/>
            <person name="Howland T.J."/>
            <person name="Wei M.-H."/>
            <person name="Ibegwam C."/>
            <person name="Jalali M."/>
            <person name="Kalush F."/>
            <person name="Karpen G.H."/>
            <person name="Ke Z."/>
            <person name="Kennison J.A."/>
            <person name="Ketchum K.A."/>
            <person name="Kimmel B.E."/>
            <person name="Kodira C.D."/>
            <person name="Kraft C.L."/>
            <person name="Kravitz S."/>
            <person name="Kulp D."/>
            <person name="Lai Z."/>
            <person name="Lasko P."/>
            <person name="Lei Y."/>
            <person name="Levitsky A.A."/>
            <person name="Li J.H."/>
            <person name="Li Z."/>
            <person name="Liang Y."/>
            <person name="Lin X."/>
            <person name="Liu X."/>
            <person name="Mattei B."/>
            <person name="McIntosh T.C."/>
            <person name="McLeod M.P."/>
            <person name="McPherson D."/>
            <person name="Merkulov G."/>
            <person name="Milshina N.V."/>
            <person name="Mobarry C."/>
            <person name="Morris J."/>
            <person name="Moshrefi A."/>
            <person name="Mount S.M."/>
            <person name="Moy M."/>
            <person name="Murphy B."/>
            <person name="Murphy L."/>
            <person name="Muzny D.M."/>
            <person name="Nelson D.L."/>
            <person name="Nelson D.R."/>
            <person name="Nelson K.A."/>
            <person name="Nixon K."/>
            <person name="Nusskern D.R."/>
            <person name="Pacleb J.M."/>
            <person name="Palazzolo M."/>
            <person name="Pittman G.S."/>
            <person name="Pan S."/>
            <person name="Pollard J."/>
            <person name="Puri V."/>
            <person name="Reese M.G."/>
            <person name="Reinert K."/>
            <person name="Remington K."/>
            <person name="Saunders R.D.C."/>
            <person name="Scheeler F."/>
            <person name="Shen H."/>
            <person name="Shue B.C."/>
            <person name="Siden-Kiamos I."/>
            <person name="Simpson M."/>
            <person name="Skupski M.P."/>
            <person name="Smith T.J."/>
            <person name="Spier E."/>
            <person name="Spradling A.C."/>
            <person name="Stapleton M."/>
            <person name="Strong R."/>
            <person name="Sun E."/>
            <person name="Svirskas R."/>
            <person name="Tector C."/>
            <person name="Turner R."/>
            <person name="Venter E."/>
            <person name="Wang A.H."/>
            <person name="Wang X."/>
            <person name="Wang Z.-Y."/>
            <person name="Wassarman D.A."/>
            <person name="Weinstock G.M."/>
            <person name="Weissenbach J."/>
            <person name="Williams S.M."/>
            <person name="Woodage T."/>
            <person name="Worley K.C."/>
            <person name="Wu D."/>
            <person name="Yang S."/>
            <person name="Yao Q.A."/>
            <person name="Ye J."/>
            <person name="Yeh R.-F."/>
            <person name="Zaveri J.S."/>
            <person name="Zhan M."/>
            <person name="Zhang G."/>
            <person name="Zhao Q."/>
            <person name="Zheng L."/>
            <person name="Zheng X.H."/>
            <person name="Zhong F.N."/>
            <person name="Zhong W."/>
            <person name="Zhou X."/>
            <person name="Zhu S.C."/>
            <person name="Zhu X."/>
            <person name="Smith H.O."/>
            <person name="Gibbs R.A."/>
            <person name="Myers E.W."/>
            <person name="Rubin G.M."/>
            <person name="Venter J.C."/>
        </authorList>
    </citation>
    <scope>NUCLEOTIDE SEQUENCE [LARGE SCALE GENOMIC DNA]</scope>
    <source>
        <strain>Berkeley</strain>
    </source>
</reference>
<reference key="2">
    <citation type="journal article" date="2002" name="Genome Biol.">
        <title>Annotation of the Drosophila melanogaster euchromatic genome: a systematic review.</title>
        <authorList>
            <person name="Misra S."/>
            <person name="Crosby M.A."/>
            <person name="Mungall C.J."/>
            <person name="Matthews B.B."/>
            <person name="Campbell K.S."/>
            <person name="Hradecky P."/>
            <person name="Huang Y."/>
            <person name="Kaminker J.S."/>
            <person name="Millburn G.H."/>
            <person name="Prochnik S.E."/>
            <person name="Smith C.D."/>
            <person name="Tupy J.L."/>
            <person name="Whitfield E.J."/>
            <person name="Bayraktaroglu L."/>
            <person name="Berman B.P."/>
            <person name="Bettencourt B.R."/>
            <person name="Celniker S.E."/>
            <person name="de Grey A.D.N.J."/>
            <person name="Drysdale R.A."/>
            <person name="Harris N.L."/>
            <person name="Richter J."/>
            <person name="Russo S."/>
            <person name="Schroeder A.J."/>
            <person name="Shu S.Q."/>
            <person name="Stapleton M."/>
            <person name="Yamada C."/>
            <person name="Ashburner M."/>
            <person name="Gelbart W.M."/>
            <person name="Rubin G.M."/>
            <person name="Lewis S.E."/>
        </authorList>
    </citation>
    <scope>GENOME REANNOTATION</scope>
    <source>
        <strain>Berkeley</strain>
    </source>
</reference>
<reference key="3">
    <citation type="submission" date="2009-11" db="EMBL/GenBank/DDBJ databases">
        <authorList>
            <person name="Carlson J."/>
            <person name="Booth B."/>
            <person name="Frise E."/>
            <person name="Sandler J."/>
            <person name="Wan K."/>
            <person name="Yu C."/>
            <person name="Celniker S."/>
        </authorList>
    </citation>
    <scope>NUCLEOTIDE SEQUENCE [LARGE SCALE MRNA]</scope>
    <source>
        <strain>Berkeley</strain>
    </source>
</reference>
<reference key="4">
    <citation type="journal article" date="2016" name="PLoS ONE">
        <title>UBA5 mutations cause a new form of autosomal recessive cerebellar ataxia.</title>
        <authorList>
            <person name="Duan R."/>
            <person name="Shi Y."/>
            <person name="Yu L."/>
            <person name="Zhang G."/>
            <person name="Li J."/>
            <person name="Lin Y."/>
            <person name="Guo J."/>
            <person name="Wang J."/>
            <person name="Shen L."/>
            <person name="Jiang H."/>
            <person name="Wang G."/>
            <person name="Tang B."/>
        </authorList>
    </citation>
    <scope>FUNCTION</scope>
    <scope>DISRUPTION PHENOTYPE</scope>
</reference>
<reference key="5">
    <citation type="journal article" date="2023" name="Cell. Mol. Life Sci.">
        <title>A neuroprotective role of Ufmylation through Atg9 in the aging brain of Drosophila.</title>
        <authorList>
            <person name="Li H."/>
            <person name="Yu Z."/>
            <person name="Niu Z."/>
            <person name="Cheng Y."/>
            <person name="Wei Z."/>
            <person name="Cai Y."/>
            <person name="Ma F."/>
            <person name="Hu L."/>
            <person name="Zhu J."/>
            <person name="Zhang W."/>
        </authorList>
    </citation>
    <scope>DEVELOPMENTAL STAGE</scope>
</reference>
<protein>
    <recommendedName>
        <fullName evidence="6">Ubiquitin-fold modifier 1</fullName>
    </recommendedName>
</protein>